<dbReference type="EMBL" id="D32216">
    <property type="protein sequence ID" value="BAA06920.1"/>
    <property type="molecule type" value="Genomic_DNA"/>
</dbReference>
<dbReference type="EMBL" id="D84432">
    <property type="protein sequence ID" value="BAA12381.1"/>
    <property type="molecule type" value="Genomic_DNA"/>
</dbReference>
<dbReference type="EMBL" id="AL009126">
    <property type="protein sequence ID" value="CAB14574.1"/>
    <property type="molecule type" value="Genomic_DNA"/>
</dbReference>
<dbReference type="PIR" id="D69950">
    <property type="entry name" value="D69950"/>
</dbReference>
<dbReference type="RefSeq" id="NP_390510.1">
    <property type="nucleotide sequence ID" value="NC_000964.3"/>
</dbReference>
<dbReference type="RefSeq" id="WP_003229902.1">
    <property type="nucleotide sequence ID" value="NZ_OZ025638.1"/>
</dbReference>
<dbReference type="SMR" id="P54372"/>
<dbReference type="FunCoup" id="P54372">
    <property type="interactions" value="119"/>
</dbReference>
<dbReference type="STRING" id="224308.BSU26330"/>
<dbReference type="PaxDb" id="224308-BSU26330"/>
<dbReference type="EnsemblBacteria" id="CAB14574">
    <property type="protein sequence ID" value="CAB14574"/>
    <property type="gene ID" value="BSU_26330"/>
</dbReference>
<dbReference type="GeneID" id="937682"/>
<dbReference type="KEGG" id="bsu:BSU26330"/>
<dbReference type="PATRIC" id="fig|224308.179.peg.2861"/>
<dbReference type="InParanoid" id="P54372"/>
<dbReference type="OrthoDB" id="2914420at2"/>
<dbReference type="BioCyc" id="BSUB:BSU26330-MONOMER"/>
<dbReference type="Proteomes" id="UP000001570">
    <property type="component" value="Chromosome"/>
</dbReference>
<organism>
    <name type="scientific">Bacillus subtilis (strain 168)</name>
    <dbReference type="NCBI Taxonomy" id="224308"/>
    <lineage>
        <taxon>Bacteria</taxon>
        <taxon>Bacillati</taxon>
        <taxon>Bacillota</taxon>
        <taxon>Bacilli</taxon>
        <taxon>Bacillales</taxon>
        <taxon>Bacillaceae</taxon>
        <taxon>Bacillus</taxon>
    </lineage>
</organism>
<reference key="1">
    <citation type="journal article" date="1995" name="Microbiology">
        <title>Complete nucleotide sequence of a skin element excised by DNA rearrangement during sporulation in Bacillus subtilis.</title>
        <authorList>
            <person name="Takemaru K."/>
            <person name="Mizuno M."/>
            <person name="Sato T."/>
            <person name="Takeuchi M."/>
            <person name="Kobayashi Y."/>
        </authorList>
    </citation>
    <scope>NUCLEOTIDE SEQUENCE [GENOMIC DNA]</scope>
    <source>
        <strain>168 / JH642</strain>
    </source>
</reference>
<reference key="2">
    <citation type="journal article" date="1996" name="Microbiology">
        <title>Systematic sequencing of the 283 kb 210 degrees-232 degrees region of the Bacillus subtilis genome containing the skin element and many sporulation genes.</title>
        <authorList>
            <person name="Mizuno M."/>
            <person name="Masuda S."/>
            <person name="Takemaru K."/>
            <person name="Hosono S."/>
            <person name="Sato T."/>
            <person name="Takeuchi M."/>
            <person name="Kobayashi Y."/>
        </authorList>
    </citation>
    <scope>NUCLEOTIDE SEQUENCE [GENOMIC DNA]</scope>
    <source>
        <strain>168 / JH642</strain>
    </source>
</reference>
<reference key="3">
    <citation type="journal article" date="1997" name="Nature">
        <title>The complete genome sequence of the Gram-positive bacterium Bacillus subtilis.</title>
        <authorList>
            <person name="Kunst F."/>
            <person name="Ogasawara N."/>
            <person name="Moszer I."/>
            <person name="Albertini A.M."/>
            <person name="Alloni G."/>
            <person name="Azevedo V."/>
            <person name="Bertero M.G."/>
            <person name="Bessieres P."/>
            <person name="Bolotin A."/>
            <person name="Borchert S."/>
            <person name="Borriss R."/>
            <person name="Boursier L."/>
            <person name="Brans A."/>
            <person name="Braun M."/>
            <person name="Brignell S.C."/>
            <person name="Bron S."/>
            <person name="Brouillet S."/>
            <person name="Bruschi C.V."/>
            <person name="Caldwell B."/>
            <person name="Capuano V."/>
            <person name="Carter N.M."/>
            <person name="Choi S.-K."/>
            <person name="Codani J.-J."/>
            <person name="Connerton I.F."/>
            <person name="Cummings N.J."/>
            <person name="Daniel R.A."/>
            <person name="Denizot F."/>
            <person name="Devine K.M."/>
            <person name="Duesterhoeft A."/>
            <person name="Ehrlich S.D."/>
            <person name="Emmerson P.T."/>
            <person name="Entian K.-D."/>
            <person name="Errington J."/>
            <person name="Fabret C."/>
            <person name="Ferrari E."/>
            <person name="Foulger D."/>
            <person name="Fritz C."/>
            <person name="Fujita M."/>
            <person name="Fujita Y."/>
            <person name="Fuma S."/>
            <person name="Galizzi A."/>
            <person name="Galleron N."/>
            <person name="Ghim S.-Y."/>
            <person name="Glaser P."/>
            <person name="Goffeau A."/>
            <person name="Golightly E.J."/>
            <person name="Grandi G."/>
            <person name="Guiseppi G."/>
            <person name="Guy B.J."/>
            <person name="Haga K."/>
            <person name="Haiech J."/>
            <person name="Harwood C.R."/>
            <person name="Henaut A."/>
            <person name="Hilbert H."/>
            <person name="Holsappel S."/>
            <person name="Hosono S."/>
            <person name="Hullo M.-F."/>
            <person name="Itaya M."/>
            <person name="Jones L.-M."/>
            <person name="Joris B."/>
            <person name="Karamata D."/>
            <person name="Kasahara Y."/>
            <person name="Klaerr-Blanchard M."/>
            <person name="Klein C."/>
            <person name="Kobayashi Y."/>
            <person name="Koetter P."/>
            <person name="Koningstein G."/>
            <person name="Krogh S."/>
            <person name="Kumano M."/>
            <person name="Kurita K."/>
            <person name="Lapidus A."/>
            <person name="Lardinois S."/>
            <person name="Lauber J."/>
            <person name="Lazarevic V."/>
            <person name="Lee S.-M."/>
            <person name="Levine A."/>
            <person name="Liu H."/>
            <person name="Masuda S."/>
            <person name="Mauel C."/>
            <person name="Medigue C."/>
            <person name="Medina N."/>
            <person name="Mellado R.P."/>
            <person name="Mizuno M."/>
            <person name="Moestl D."/>
            <person name="Nakai S."/>
            <person name="Noback M."/>
            <person name="Noone D."/>
            <person name="O'Reilly M."/>
            <person name="Ogawa K."/>
            <person name="Ogiwara A."/>
            <person name="Oudega B."/>
            <person name="Park S.-H."/>
            <person name="Parro V."/>
            <person name="Pohl T.M."/>
            <person name="Portetelle D."/>
            <person name="Porwollik S."/>
            <person name="Prescott A.M."/>
            <person name="Presecan E."/>
            <person name="Pujic P."/>
            <person name="Purnelle B."/>
            <person name="Rapoport G."/>
            <person name="Rey M."/>
            <person name="Reynolds S."/>
            <person name="Rieger M."/>
            <person name="Rivolta C."/>
            <person name="Rocha E."/>
            <person name="Roche B."/>
            <person name="Rose M."/>
            <person name="Sadaie Y."/>
            <person name="Sato T."/>
            <person name="Scanlan E."/>
            <person name="Schleich S."/>
            <person name="Schroeter R."/>
            <person name="Scoffone F."/>
            <person name="Sekiguchi J."/>
            <person name="Sekowska A."/>
            <person name="Seror S.J."/>
            <person name="Serror P."/>
            <person name="Shin B.-S."/>
            <person name="Soldo B."/>
            <person name="Sorokin A."/>
            <person name="Tacconi E."/>
            <person name="Takagi T."/>
            <person name="Takahashi H."/>
            <person name="Takemaru K."/>
            <person name="Takeuchi M."/>
            <person name="Tamakoshi A."/>
            <person name="Tanaka T."/>
            <person name="Terpstra P."/>
            <person name="Tognoni A."/>
            <person name="Tosato V."/>
            <person name="Uchiyama S."/>
            <person name="Vandenbol M."/>
            <person name="Vannier F."/>
            <person name="Vassarotti A."/>
            <person name="Viari A."/>
            <person name="Wambutt R."/>
            <person name="Wedler E."/>
            <person name="Wedler H."/>
            <person name="Weitzenegger T."/>
            <person name="Winters P."/>
            <person name="Wipat A."/>
            <person name="Yamamoto H."/>
            <person name="Yamane K."/>
            <person name="Yasumoto K."/>
            <person name="Yata K."/>
            <person name="Yoshida K."/>
            <person name="Yoshikawa H.-F."/>
            <person name="Zumstein E."/>
            <person name="Yoshikawa H."/>
            <person name="Danchin A."/>
        </authorList>
    </citation>
    <scope>NUCLEOTIDE SEQUENCE [LARGE SCALE GENOMIC DNA]</scope>
    <source>
        <strain>168</strain>
    </source>
</reference>
<sequence>MKVILKKGPLFEQAEAKAYKYLSGILVQRMNEHQEKLAQKNKKESA</sequence>
<keyword id="KW-1185">Reference proteome</keyword>
<proteinExistence type="predicted"/>
<gene>
    <name type="primary">yqdA</name>
    <name type="synonym">yqcS</name>
    <name type="ordered locus">BSU26330</name>
</gene>
<protein>
    <recommendedName>
        <fullName>Uncharacterized protein YqdA</fullName>
    </recommendedName>
    <alternativeName>
        <fullName>ORF8</fullName>
    </alternativeName>
</protein>
<feature type="chain" id="PRO_0000049780" description="Uncharacterized protein YqdA">
    <location>
        <begin position="1"/>
        <end position="46"/>
    </location>
</feature>
<name>YQDA_BACSU</name>
<accession>P54372</accession>